<protein>
    <recommendedName>
        <fullName>AP2-like ethylene-responsive transcription factor TOE2</fullName>
    </recommendedName>
    <alternativeName>
        <fullName>Protein TARGET OF EAT 2</fullName>
    </alternativeName>
</protein>
<sequence>MLDLNLDVDSTESTQNERDSITVKGVSLNQMDESVTSNSSVVNAEASSCIDGEDELCSTRTVKFQFEILKGGGEEEEEDDDERSAVMMTKEFFPVAKGMNFMDSSAQSSRSTVDISFQRGKQGGDFIGSGSGGGDASRVMQPPSQPVKKSRRGPRSKSSQYRGVTFYRRTGRWESHIWDCGKQVYLGGFDTAHAAARAYDRAAVKFRGLEADINFVIGDYEEDLKQMANLSKEEVVQVLRRQSSGFSRNNSRYQGVALQKIGGWGAQMEQLHGNMGCDKAAVQWKGREAASLIEPHASRMIPEAANVKLDLNLGISLSLGDGPKQKDRALRLHHVPNNSVCGRNTMMENHMAAAACDTPFNFLKRGSDHLNNRHALPSAFFSPMERTPEKGLMLRSHQSFPARTWQGHDQSSGGTAVAATAPPLFSNAASSGFSLSATRPPSSTAIHHPSQPFVNLNQPGLYVIHPSDYISQHQHNLMNRPQPPP</sequence>
<accession>Q9LVG2</accession>
<dbReference type="EMBL" id="AB019231">
    <property type="protein sequence ID" value="BAA96941.1"/>
    <property type="molecule type" value="Genomic_DNA"/>
</dbReference>
<dbReference type="EMBL" id="CP002688">
    <property type="protein sequence ID" value="AED97280.1"/>
    <property type="molecule type" value="Genomic_DNA"/>
</dbReference>
<dbReference type="EMBL" id="BT001916">
    <property type="protein sequence ID" value="AAN71915.1"/>
    <property type="molecule type" value="mRNA"/>
</dbReference>
<dbReference type="RefSeq" id="NP_200820.3">
    <molecule id="Q9LVG2-1"/>
    <property type="nucleotide sequence ID" value="NM_125405.4"/>
</dbReference>
<dbReference type="SMR" id="Q9LVG2"/>
<dbReference type="BioGRID" id="21378">
    <property type="interactions" value="88"/>
</dbReference>
<dbReference type="FunCoup" id="Q9LVG2">
    <property type="interactions" value="2"/>
</dbReference>
<dbReference type="IntAct" id="Q9LVG2">
    <property type="interactions" value="69"/>
</dbReference>
<dbReference type="STRING" id="3702.Q9LVG2"/>
<dbReference type="PaxDb" id="3702-AT5G60120.2"/>
<dbReference type="ProteomicsDB" id="234284">
    <molecule id="Q9LVG2-1"/>
</dbReference>
<dbReference type="EnsemblPlants" id="AT5G60120.1">
    <molecule id="Q9LVG2-1"/>
    <property type="protein sequence ID" value="AT5G60120.1"/>
    <property type="gene ID" value="AT5G60120"/>
</dbReference>
<dbReference type="GeneID" id="836134"/>
<dbReference type="Gramene" id="AT5G60120.1">
    <molecule id="Q9LVG2-1"/>
    <property type="protein sequence ID" value="AT5G60120.1"/>
    <property type="gene ID" value="AT5G60120"/>
</dbReference>
<dbReference type="KEGG" id="ath:AT5G60120"/>
<dbReference type="Araport" id="AT5G60120"/>
<dbReference type="TAIR" id="AT5G60120">
    <property type="gene designation" value="TOE2"/>
</dbReference>
<dbReference type="eggNOG" id="ENOG502R1D7">
    <property type="taxonomic scope" value="Eukaryota"/>
</dbReference>
<dbReference type="HOGENOM" id="CLU_035462_3_1_1"/>
<dbReference type="InParanoid" id="Q9LVG2"/>
<dbReference type="PhylomeDB" id="Q9LVG2"/>
<dbReference type="PRO" id="PR:Q9LVG2"/>
<dbReference type="Proteomes" id="UP000006548">
    <property type="component" value="Chromosome 5"/>
</dbReference>
<dbReference type="ExpressionAtlas" id="Q9LVG2">
    <property type="expression patterns" value="baseline and differential"/>
</dbReference>
<dbReference type="GO" id="GO:0005634">
    <property type="term" value="C:nucleus"/>
    <property type="evidence" value="ECO:0007669"/>
    <property type="project" value="UniProtKB-SubCell"/>
</dbReference>
<dbReference type="GO" id="GO:0003677">
    <property type="term" value="F:DNA binding"/>
    <property type="evidence" value="ECO:0007669"/>
    <property type="project" value="UniProtKB-KW"/>
</dbReference>
<dbReference type="GO" id="GO:0003700">
    <property type="term" value="F:DNA-binding transcription factor activity"/>
    <property type="evidence" value="ECO:0007669"/>
    <property type="project" value="InterPro"/>
</dbReference>
<dbReference type="GO" id="GO:0042802">
    <property type="term" value="F:identical protein binding"/>
    <property type="evidence" value="ECO:0000353"/>
    <property type="project" value="IntAct"/>
</dbReference>
<dbReference type="GO" id="GO:0009873">
    <property type="term" value="P:ethylene-activated signaling pathway"/>
    <property type="evidence" value="ECO:0007669"/>
    <property type="project" value="UniProtKB-KW"/>
</dbReference>
<dbReference type="CDD" id="cd00018">
    <property type="entry name" value="AP2"/>
    <property type="match status" value="1"/>
</dbReference>
<dbReference type="FunFam" id="3.30.730.10:FF:000004">
    <property type="entry name" value="AP2-like ethylene-responsive transcription factor"/>
    <property type="match status" value="1"/>
</dbReference>
<dbReference type="Gene3D" id="3.30.730.10">
    <property type="entry name" value="AP2/ERF domain"/>
    <property type="match status" value="1"/>
</dbReference>
<dbReference type="InterPro" id="IPR001471">
    <property type="entry name" value="AP2/ERF_dom"/>
</dbReference>
<dbReference type="InterPro" id="IPR036955">
    <property type="entry name" value="AP2/ERF_dom_sf"/>
</dbReference>
<dbReference type="InterPro" id="IPR016177">
    <property type="entry name" value="DNA-bd_dom_sf"/>
</dbReference>
<dbReference type="PANTHER" id="PTHR32467">
    <property type="entry name" value="AP2-LIKE ETHYLENE-RESPONSIVE TRANSCRIPTION FACTOR"/>
    <property type="match status" value="1"/>
</dbReference>
<dbReference type="PANTHER" id="PTHR32467:SF221">
    <property type="entry name" value="AP2-LIKE ETHYLENE-RESPONSIVE TRANSCRIPTION FACTOR TOE2"/>
    <property type="match status" value="1"/>
</dbReference>
<dbReference type="Pfam" id="PF00847">
    <property type="entry name" value="AP2"/>
    <property type="match status" value="1"/>
</dbReference>
<dbReference type="SMART" id="SM00380">
    <property type="entry name" value="AP2"/>
    <property type="match status" value="1"/>
</dbReference>
<dbReference type="SUPFAM" id="SSF54171">
    <property type="entry name" value="DNA-binding domain"/>
    <property type="match status" value="1"/>
</dbReference>
<dbReference type="PROSITE" id="PS51032">
    <property type="entry name" value="AP2_ERF"/>
    <property type="match status" value="1"/>
</dbReference>
<reference key="1">
    <citation type="journal article" date="2000" name="DNA Res.">
        <title>Structural analysis of Arabidopsis thaliana chromosome 5. X. Sequence features of the regions of 3,076,755 bp covered by sixty P1 and TAC clones.</title>
        <authorList>
            <person name="Sato S."/>
            <person name="Nakamura Y."/>
            <person name="Kaneko T."/>
            <person name="Katoh T."/>
            <person name="Asamizu E."/>
            <person name="Kotani H."/>
            <person name="Tabata S."/>
        </authorList>
    </citation>
    <scope>NUCLEOTIDE SEQUENCE [LARGE SCALE GENOMIC DNA]</scope>
    <source>
        <strain>cv. Columbia</strain>
    </source>
</reference>
<reference key="2">
    <citation type="journal article" date="2017" name="Plant J.">
        <title>Araport11: a complete reannotation of the Arabidopsis thaliana reference genome.</title>
        <authorList>
            <person name="Cheng C.Y."/>
            <person name="Krishnakumar V."/>
            <person name="Chan A.P."/>
            <person name="Thibaud-Nissen F."/>
            <person name="Schobel S."/>
            <person name="Town C.D."/>
        </authorList>
    </citation>
    <scope>GENOME REANNOTATION</scope>
    <source>
        <strain>cv. Columbia</strain>
    </source>
</reference>
<reference key="3">
    <citation type="journal article" date="2003" name="Science">
        <title>Empirical analysis of transcriptional activity in the Arabidopsis genome.</title>
        <authorList>
            <person name="Yamada K."/>
            <person name="Lim J."/>
            <person name="Dale J.M."/>
            <person name="Chen H."/>
            <person name="Shinn P."/>
            <person name="Palm C.J."/>
            <person name="Southwick A.M."/>
            <person name="Wu H.C."/>
            <person name="Kim C.J."/>
            <person name="Nguyen M."/>
            <person name="Pham P.K."/>
            <person name="Cheuk R.F."/>
            <person name="Karlin-Newmann G."/>
            <person name="Liu S.X."/>
            <person name="Lam B."/>
            <person name="Sakano H."/>
            <person name="Wu T."/>
            <person name="Yu G."/>
            <person name="Miranda M."/>
            <person name="Quach H.L."/>
            <person name="Tripp M."/>
            <person name="Chang C.H."/>
            <person name="Lee J.M."/>
            <person name="Toriumi M.J."/>
            <person name="Chan M.M."/>
            <person name="Tang C.C."/>
            <person name="Onodera C.S."/>
            <person name="Deng J.M."/>
            <person name="Akiyama K."/>
            <person name="Ansari Y."/>
            <person name="Arakawa T."/>
            <person name="Banh J."/>
            <person name="Banno F."/>
            <person name="Bowser L."/>
            <person name="Brooks S.Y."/>
            <person name="Carninci P."/>
            <person name="Chao Q."/>
            <person name="Choy N."/>
            <person name="Enju A."/>
            <person name="Goldsmith A.D."/>
            <person name="Gurjal M."/>
            <person name="Hansen N.F."/>
            <person name="Hayashizaki Y."/>
            <person name="Johnson-Hopson C."/>
            <person name="Hsuan V.W."/>
            <person name="Iida K."/>
            <person name="Karnes M."/>
            <person name="Khan S."/>
            <person name="Koesema E."/>
            <person name="Ishida J."/>
            <person name="Jiang P.X."/>
            <person name="Jones T."/>
            <person name="Kawai J."/>
            <person name="Kamiya A."/>
            <person name="Meyers C."/>
            <person name="Nakajima M."/>
            <person name="Narusaka M."/>
            <person name="Seki M."/>
            <person name="Sakurai T."/>
            <person name="Satou M."/>
            <person name="Tamse R."/>
            <person name="Vaysberg M."/>
            <person name="Wallender E.K."/>
            <person name="Wong C."/>
            <person name="Yamamura Y."/>
            <person name="Yuan S."/>
            <person name="Shinozaki K."/>
            <person name="Davis R.W."/>
            <person name="Theologis A."/>
            <person name="Ecker J.R."/>
        </authorList>
    </citation>
    <scope>NUCLEOTIDE SEQUENCE [LARGE SCALE MRNA]</scope>
    <source>
        <strain>cv. Columbia</strain>
    </source>
</reference>
<reference key="4">
    <citation type="journal article" date="2003" name="Plant Cell">
        <title>Regulation of flowering time and floral organ identity by a microRNA and its APETALA2-like target genes.</title>
        <authorList>
            <person name="Aukerman M.J."/>
            <person name="Sakai H."/>
        </authorList>
    </citation>
    <scope>FUNCTION</scope>
    <scope>INDUCTION</scope>
</reference>
<reference key="5">
    <citation type="journal article" date="2006" name="Plant Physiol.">
        <title>Genome-wide analysis of the ERF gene family in Arabidopsis and rice.</title>
        <authorList>
            <person name="Nakano T."/>
            <person name="Suzuki K."/>
            <person name="Fujimura T."/>
            <person name="Shinshi H."/>
        </authorList>
    </citation>
    <scope>GENE FAMILY</scope>
    <scope>NOMENCLATURE</scope>
</reference>
<gene>
    <name type="primary">TOE2</name>
    <name type="ordered locus">At5g60120</name>
    <name type="ORF">MGO3.10</name>
</gene>
<keyword id="KW-0010">Activator</keyword>
<keyword id="KW-0025">Alternative splicing</keyword>
<keyword id="KW-0238">DNA-binding</keyword>
<keyword id="KW-0936">Ethylene signaling pathway</keyword>
<keyword id="KW-0539">Nucleus</keyword>
<keyword id="KW-1185">Reference proteome</keyword>
<keyword id="KW-0804">Transcription</keyword>
<keyword id="KW-0805">Transcription regulation</keyword>
<evidence type="ECO:0000250" key="1"/>
<evidence type="ECO:0000255" key="2">
    <source>
        <dbReference type="PROSITE-ProRule" id="PRU00366"/>
    </source>
</evidence>
<evidence type="ECO:0000256" key="3">
    <source>
        <dbReference type="SAM" id="MobiDB-lite"/>
    </source>
</evidence>
<evidence type="ECO:0000269" key="4">
    <source>
    </source>
</evidence>
<evidence type="ECO:0000305" key="5"/>
<comment type="function">
    <text evidence="1 4">Probably acts as a transcriptional activator. Binds to the GCC-box pathogenesis-related promoter element. May be involved in the regulation of gene expression by stress factors and by components of stress signal transduction pathways (By similarity). Regulates negatively the transition to flowering time and confers flowering time delay.</text>
</comment>
<comment type="interaction">
    <interactant intactId="EBI-4424568">
        <id>Q9LVG2</id>
    </interactant>
    <interactant intactId="EBI-15191587">
        <id>F4K1A8</id>
        <label>At5g26749</label>
    </interactant>
    <organismsDiffer>false</organismsDiffer>
    <experiments>3</experiments>
</comment>
<comment type="interaction">
    <interactant intactId="EBI-4424568">
        <id>Q9LVG2</id>
    </interactant>
    <interactant intactId="EBI-1536772">
        <id>O04292</id>
        <label>ATHB-9</label>
    </interactant>
    <organismsDiffer>false</organismsDiffer>
    <experiments>3</experiments>
</comment>
<comment type="interaction">
    <interactant intactId="EBI-4424568">
        <id>Q9LVG2</id>
    </interactant>
    <interactant intactId="EBI-15191535">
        <id>O80748</id>
        <label>BBX26</label>
    </interactant>
    <organismsDiffer>false</organismsDiffer>
    <experiments>3</experiments>
</comment>
<comment type="interaction">
    <interactant intactId="EBI-4424568">
        <id>Q9LVG2</id>
    </interactant>
    <interactant intactId="EBI-4426649">
        <id>Q17TI5</id>
        <label>BRX</label>
    </interactant>
    <organismsDiffer>false</organismsDiffer>
    <experiments>4</experiments>
</comment>
<comment type="interaction">
    <interactant intactId="EBI-4424568">
        <id>Q9LVG2</id>
    </interactant>
    <interactant intactId="EBI-531055">
        <id>Q8W575</id>
        <label>CSN3</label>
    </interactant>
    <organismsDiffer>false</organismsDiffer>
    <experiments>3</experiments>
</comment>
<comment type="interaction">
    <interactant intactId="EBI-4424568">
        <id>Q9LVG2</id>
    </interactant>
    <interactant intactId="EBI-4446727">
        <id>Q94ID6</id>
        <label>ERF12</label>
    </interactant>
    <organismsDiffer>false</organismsDiffer>
    <experiments>4</experiments>
</comment>
<comment type="interaction">
    <interactant intactId="EBI-4424568">
        <id>Q9LVG2</id>
    </interactant>
    <interactant intactId="EBI-966009">
        <id>O80340</id>
        <label>ERF4</label>
    </interactant>
    <organismsDiffer>false</organismsDiffer>
    <experiments>3</experiments>
</comment>
<comment type="interaction">
    <interactant intactId="EBI-4424568">
        <id>Q9LVG2</id>
    </interactant>
    <interactant intactId="EBI-2000137">
        <id>Q9MAI5</id>
        <label>ERF8</label>
    </interactant>
    <organismsDiffer>false</organismsDiffer>
    <experiments>3</experiments>
</comment>
<comment type="interaction">
    <interactant intactId="EBI-4424568">
        <id>Q9LVG2</id>
    </interactant>
    <interactant intactId="EBI-4431933">
        <id>Q9FE67</id>
        <label>ERF9</label>
    </interactant>
    <organismsDiffer>false</organismsDiffer>
    <experiments>3</experiments>
</comment>
<comment type="interaction">
    <interactant intactId="EBI-4424568">
        <id>Q9LVG2</id>
    </interactant>
    <interactant intactId="EBI-4426378">
        <id>Q39103</id>
        <label>GA3OX1</label>
    </interactant>
    <organismsDiffer>false</organismsDiffer>
    <experiments>4</experiments>
</comment>
<comment type="interaction">
    <interactant intactId="EBI-4424568">
        <id>Q9LVG2</id>
    </interactant>
    <interactant intactId="EBI-446380">
        <id>Q9SQI2</id>
        <label>GI</label>
    </interactant>
    <organismsDiffer>false</organismsDiffer>
    <experiments>3</experiments>
</comment>
<comment type="interaction">
    <interactant intactId="EBI-4424568">
        <id>Q9LVG2</id>
    </interactant>
    <interactant intactId="EBI-632231">
        <id>O24407</id>
        <label>IAA16</label>
    </interactant>
    <organismsDiffer>false</organismsDiffer>
    <experiments>3</experiments>
</comment>
<comment type="interaction">
    <interactant intactId="EBI-4424568">
        <id>Q9LVG2</id>
    </interactant>
    <interactant intactId="EBI-632272">
        <id>O24410</id>
        <label>IAA20</label>
    </interactant>
    <organismsDiffer>false</organismsDiffer>
    <experiments>3</experiments>
</comment>
<comment type="interaction">
    <interactant intactId="EBI-4424568">
        <id>Q9LVG2</id>
    </interactant>
    <interactant intactId="EBI-3946459">
        <id>Q9C5X0</id>
        <label>IAA34</label>
    </interactant>
    <organismsDiffer>false</organismsDiffer>
    <experiments>3</experiments>
</comment>
<comment type="interaction">
    <interactant intactId="EBI-4424568">
        <id>Q9LVG2</id>
    </interactant>
    <interactant intactId="EBI-307202">
        <id>P92958</id>
        <label>KIN11</label>
    </interactant>
    <organismsDiffer>false</organismsDiffer>
    <experiments>2</experiments>
</comment>
<comment type="interaction">
    <interactant intactId="EBI-4424568">
        <id>Q9LVG2</id>
    </interactant>
    <interactant intactId="EBI-530486">
        <id>P46639</id>
        <label>KNAT1</label>
    </interactant>
    <organismsDiffer>false</organismsDiffer>
    <experiments>3</experiments>
</comment>
<comment type="interaction">
    <interactant intactId="EBI-4424568">
        <id>Q9LVG2</id>
    </interactant>
    <interactant intactId="EBI-4451150">
        <id>P11035</id>
        <label>NIA2</label>
    </interactant>
    <organismsDiffer>false</organismsDiffer>
    <experiments>3</experiments>
</comment>
<comment type="interaction">
    <interactant intactId="EBI-4424568">
        <id>Q9LVG2</id>
    </interactant>
    <interactant intactId="EBI-2363104">
        <id>Q8VZS8</id>
        <label>PYL1</label>
    </interactant>
    <organismsDiffer>false</organismsDiffer>
    <experiments>3</experiments>
</comment>
<comment type="interaction">
    <interactant intactId="EBI-4424568">
        <id>Q9LVG2</id>
    </interactant>
    <interactant intactId="EBI-2363192">
        <id>Q8S8E3</id>
        <label>PYL6</label>
    </interactant>
    <organismsDiffer>false</organismsDiffer>
    <experiments>3</experiments>
</comment>
<comment type="interaction">
    <interactant intactId="EBI-4424568">
        <id>Q9LVG2</id>
    </interactant>
    <interactant intactId="EBI-2349513">
        <id>Q84MC7</id>
        <label>PYL9</label>
    </interactant>
    <organismsDiffer>false</organismsDiffer>
    <experiments>3</experiments>
</comment>
<comment type="interaction">
    <interactant intactId="EBI-4424568">
        <id>Q9LVG2</id>
    </interactant>
    <interactant intactId="EBI-4425094">
        <id>O82239</id>
        <label>RFI2</label>
    </interactant>
    <organismsDiffer>false</organismsDiffer>
    <experiments>3</experiments>
</comment>
<comment type="interaction">
    <interactant intactId="EBI-4424568">
        <id>Q9LVG2</id>
    </interactant>
    <interactant intactId="EBI-4426966">
        <id>Q9M8Y0</id>
        <label>SEC</label>
    </interactant>
    <organismsDiffer>false</organismsDiffer>
    <experiments>4</experiments>
</comment>
<comment type="interaction">
    <interactant intactId="EBI-4424568">
        <id>Q9LVG2</id>
    </interactant>
    <interactant intactId="EBI-4424568">
        <id>Q9LVG2</id>
        <label>TOE2</label>
    </interactant>
    <organismsDiffer>false</organismsDiffer>
    <experiments>8</experiments>
</comment>
<comment type="interaction">
    <interactant intactId="EBI-4424568">
        <id>Q9LVG2</id>
    </interactant>
    <interactant intactId="EBI-15202502">
        <id>Q8H0Y8</id>
        <label>WRKY41</label>
    </interactant>
    <organismsDiffer>false</organismsDiffer>
    <experiments>3</experiments>
</comment>
<comment type="interaction">
    <interactant intactId="EBI-4424568">
        <id>Q9LVG2</id>
    </interactant>
    <interactant intactId="EBI-25511549">
        <id>Q9FQ04</id>
        <label>XRN4</label>
    </interactant>
    <organismsDiffer>false</organismsDiffer>
    <experiments>4</experiments>
</comment>
<comment type="subcellular location">
    <subcellularLocation>
        <location evidence="5">Nucleus</location>
    </subcellularLocation>
</comment>
<comment type="alternative products">
    <event type="alternative splicing"/>
    <isoform>
        <id>Q9LVG2-1</id>
        <name>1</name>
        <sequence type="displayed"/>
    </isoform>
    <text>A number of isoforms are produced. According to EST sequences.</text>
</comment>
<comment type="induction">
    <text evidence="4">Repressed by miR172a-2/EAT.</text>
</comment>
<comment type="similarity">
    <text evidence="5">Belongs to the AP2/ERF transcription factor family. AP2 subfamily.</text>
</comment>
<organism>
    <name type="scientific">Arabidopsis thaliana</name>
    <name type="common">Mouse-ear cress</name>
    <dbReference type="NCBI Taxonomy" id="3702"/>
    <lineage>
        <taxon>Eukaryota</taxon>
        <taxon>Viridiplantae</taxon>
        <taxon>Streptophyta</taxon>
        <taxon>Embryophyta</taxon>
        <taxon>Tracheophyta</taxon>
        <taxon>Spermatophyta</taxon>
        <taxon>Magnoliopsida</taxon>
        <taxon>eudicotyledons</taxon>
        <taxon>Gunneridae</taxon>
        <taxon>Pentapetalae</taxon>
        <taxon>rosids</taxon>
        <taxon>malvids</taxon>
        <taxon>Brassicales</taxon>
        <taxon>Brassicaceae</taxon>
        <taxon>Camelineae</taxon>
        <taxon>Arabidopsis</taxon>
    </lineage>
</organism>
<name>TOE2_ARATH</name>
<proteinExistence type="evidence at protein level"/>
<feature type="chain" id="PRO_0000290366" description="AP2-like ethylene-responsive transcription factor TOE2">
    <location>
        <begin position="1"/>
        <end position="485"/>
    </location>
</feature>
<feature type="DNA-binding region" description="AP2/ERF" evidence="2">
    <location>
        <begin position="160"/>
        <end position="216"/>
    </location>
</feature>
<feature type="region of interest" description="Disordered" evidence="3">
    <location>
        <begin position="124"/>
        <end position="161"/>
    </location>
</feature>
<feature type="compositionally biased region" description="Gly residues" evidence="3">
    <location>
        <begin position="124"/>
        <end position="135"/>
    </location>
</feature>